<feature type="signal peptide" evidence="3">
    <location>
        <begin position="1"/>
        <end position="18"/>
    </location>
</feature>
<feature type="chain" id="PRO_5013984500" description="Class I hydrophobin 3">
    <location>
        <begin position="19"/>
        <end position="107"/>
    </location>
</feature>
<feature type="glycosylation site" description="N-linked (GlcNAc...) asparagine" evidence="4">
    <location>
        <position position="35"/>
    </location>
</feature>
<feature type="glycosylation site" description="N-linked (GlcNAc...) asparagine" evidence="4">
    <location>
        <position position="89"/>
    </location>
</feature>
<feature type="disulfide bond" evidence="2">
    <location>
        <begin position="26"/>
        <end position="86"/>
    </location>
</feature>
<feature type="disulfide bond" evidence="2">
    <location>
        <begin position="33"/>
        <end position="80"/>
    </location>
</feature>
<feature type="disulfide bond" evidence="2">
    <location>
        <begin position="34"/>
        <end position="67"/>
    </location>
</feature>
<feature type="disulfide bond" evidence="2">
    <location>
        <begin position="87"/>
        <end position="100"/>
    </location>
</feature>
<reference key="1">
    <citation type="journal article" date="2004" name="Curr. Genet.">
        <title>Three genes specifically expressed during phosphate deficiency in Pholiota nameko strain N2 encode hydrophobins.</title>
        <authorList>
            <person name="Tasaki Y."/>
            <person name="Ohata K."/>
            <person name="Hara T."/>
            <person name="Joh T."/>
        </authorList>
    </citation>
    <scope>NUCLEOTIDE SEQUENCE [MRNA]</scope>
    <scope>FUNCTION</scope>
    <scope>INDUCTION</scope>
    <source>
        <strain>N2</strain>
    </source>
</reference>
<comment type="function">
    <text evidence="5 7">Aerial growth, conidiation, and dispersal of filamentous fungi in the environment rely upon a capability of their secreting small amphipathic proteins called hydrophobins (HPBs) with low sequence identity. Class I can self-assemble into an outermost layer of rodlet bundles on aerial cell surfaces, conferring cellular hydrophobicity that supports fungal growth, development and dispersal; whereas Class II form highly ordered films at water-air interfaces through intermolecular interactions but contribute nothing to the rodlet structure (Probable). Pnh3 is a class I hydrophobin that might be involved in the attachment of the hydrophilic wall of hyphae to the hydrophobic surface of wood under inorganic phosphate (Pi)-deficient conditions and enable the mycelium to degrade efficiently the components of wood and to acquire nutrients containing Pi (PubMed:14608471).</text>
</comment>
<comment type="subunit">
    <text evidence="1">Self-assembles to form functional amyloid fibrils called rodlets. Self-assembly into fibrillar rodlets occurs spontaneously at hydrophobic:hydrophilic interfaces and the rodlets further associate laterally to form amphipathic monolayers.</text>
</comment>
<comment type="subcellular location">
    <subcellularLocation>
        <location evidence="1">Secreted</location>
    </subcellularLocation>
    <subcellularLocation>
        <location evidence="1">Secreted</location>
        <location evidence="1">Cell wall</location>
    </subcellularLocation>
</comment>
<comment type="induction">
    <text evidence="5">Expression is induced under conditions of inorganic phosphate (Pi) deficiency.</text>
</comment>
<comment type="similarity">
    <text evidence="7">Belongs to the fungal hydrophobin family.</text>
</comment>
<name>PNH3_PHONA</name>
<accession>Q8X1T7</accession>
<protein>
    <recommendedName>
        <fullName evidence="6">Class I hydrophobin 3</fullName>
    </recommendedName>
    <alternativeName>
        <fullName evidence="6">Inorganic phosphate deficiency-inducible protein 315</fullName>
    </alternativeName>
</protein>
<keyword id="KW-0134">Cell wall</keyword>
<keyword id="KW-1015">Disulfide bond</keyword>
<keyword id="KW-0325">Glycoprotein</keyword>
<keyword id="KW-0964">Secreted</keyword>
<keyword id="KW-0732">Signal</keyword>
<sequence length="107" mass="10535">MQFKVLAALVIGATLAAATGSPSNQCNTGSLQCCNSTGSATDPAIAKLFALLGINVEDVTALVGVTCSPITVVGASGSSCSEQPVCCTNDSFNGIVALGCAPINLNL</sequence>
<organism>
    <name type="scientific">Pholiota nameko</name>
    <dbReference type="NCBI Taxonomy" id="61267"/>
    <lineage>
        <taxon>Eukaryota</taxon>
        <taxon>Fungi</taxon>
        <taxon>Dikarya</taxon>
        <taxon>Basidiomycota</taxon>
        <taxon>Agaricomycotina</taxon>
        <taxon>Agaricomycetes</taxon>
        <taxon>Agaricomycetidae</taxon>
        <taxon>Agaricales</taxon>
        <taxon>Agaricineae</taxon>
        <taxon>Strophariaceae</taxon>
        <taxon>Pholiota</taxon>
    </lineage>
</organism>
<proteinExistence type="evidence at transcript level"/>
<dbReference type="EMBL" id="AB079130">
    <property type="protein sequence ID" value="BAB84547.1"/>
    <property type="molecule type" value="mRNA"/>
</dbReference>
<dbReference type="GO" id="GO:0005576">
    <property type="term" value="C:extracellular region"/>
    <property type="evidence" value="ECO:0007669"/>
    <property type="project" value="UniProtKB-KW"/>
</dbReference>
<dbReference type="GO" id="GO:0009277">
    <property type="term" value="C:fungal-type cell wall"/>
    <property type="evidence" value="ECO:0007669"/>
    <property type="project" value="InterPro"/>
</dbReference>
<dbReference type="GO" id="GO:0005199">
    <property type="term" value="F:structural constituent of cell wall"/>
    <property type="evidence" value="ECO:0007669"/>
    <property type="project" value="InterPro"/>
</dbReference>
<dbReference type="CDD" id="cd23507">
    <property type="entry name" value="hydrophobin_I"/>
    <property type="match status" value="1"/>
</dbReference>
<dbReference type="InterPro" id="IPR001338">
    <property type="entry name" value="Hydrophobin"/>
</dbReference>
<dbReference type="Pfam" id="PF01185">
    <property type="entry name" value="Hydrophobin"/>
    <property type="match status" value="1"/>
</dbReference>
<dbReference type="SMART" id="SM00075">
    <property type="entry name" value="HYDRO"/>
    <property type="match status" value="1"/>
</dbReference>
<evidence type="ECO:0000250" key="1">
    <source>
        <dbReference type="UniProtKB" id="P16933"/>
    </source>
</evidence>
<evidence type="ECO:0000250" key="2">
    <source>
        <dbReference type="UniProtKB" id="Q04571"/>
    </source>
</evidence>
<evidence type="ECO:0000255" key="3"/>
<evidence type="ECO:0000255" key="4">
    <source>
        <dbReference type="PROSITE-ProRule" id="PRU00498"/>
    </source>
</evidence>
<evidence type="ECO:0000269" key="5">
    <source>
    </source>
</evidence>
<evidence type="ECO:0000303" key="6">
    <source>
    </source>
</evidence>
<evidence type="ECO:0000305" key="7"/>
<gene>
    <name evidence="6" type="primary">pnh3</name>
    <name evidence="6" type="synonym">pdi315</name>
</gene>